<sequence length="211" mass="24387">MGKRPIIIGVAGGTGSGKTTVAKEIFYQFNEKSIVLIEQDAYYKDQSQLSLEERLQTNYDHPLAFDNDLLIEHLHSLLNGQAIEKPVYDYKLHTRSNEVILVEPKDVIILEGILLLEDERLRELMDIKLFVDTDADIRIIRRMVRDIRERGRTLESVIEQYTKVVRPMHMQFIEPTKRYADVIIPEGGQNRVAIDLMVTKIRAIIEEKAVL</sequence>
<protein>
    <recommendedName>
        <fullName evidence="1">Uridine kinase</fullName>
        <ecNumber evidence="1">2.7.1.48</ecNumber>
    </recommendedName>
    <alternativeName>
        <fullName evidence="1">Cytidine monophosphokinase</fullName>
    </alternativeName>
    <alternativeName>
        <fullName evidence="1">Uridine monophosphokinase</fullName>
    </alternativeName>
</protein>
<proteinExistence type="inferred from homology"/>
<reference key="1">
    <citation type="journal article" date="2000" name="Nucleic Acids Res.">
        <title>Complete genome sequence of the alkaliphilic bacterium Bacillus halodurans and genomic sequence comparison with Bacillus subtilis.</title>
        <authorList>
            <person name="Takami H."/>
            <person name="Nakasone K."/>
            <person name="Takaki Y."/>
            <person name="Maeno G."/>
            <person name="Sasaki R."/>
            <person name="Masui N."/>
            <person name="Fuji F."/>
            <person name="Hirama C."/>
            <person name="Nakamura Y."/>
            <person name="Ogasawara N."/>
            <person name="Kuhara S."/>
            <person name="Horikoshi K."/>
        </authorList>
    </citation>
    <scope>NUCLEOTIDE SEQUENCE [LARGE SCALE GENOMIC DNA]</scope>
    <source>
        <strain>ATCC BAA-125 / DSM 18197 / FERM 7344 / JCM 9153 / C-125</strain>
    </source>
</reference>
<organism>
    <name type="scientific">Halalkalibacterium halodurans (strain ATCC BAA-125 / DSM 18197 / FERM 7344 / JCM 9153 / C-125)</name>
    <name type="common">Bacillus halodurans</name>
    <dbReference type="NCBI Taxonomy" id="272558"/>
    <lineage>
        <taxon>Bacteria</taxon>
        <taxon>Bacillati</taxon>
        <taxon>Bacillota</taxon>
        <taxon>Bacilli</taxon>
        <taxon>Bacillales</taxon>
        <taxon>Bacillaceae</taxon>
        <taxon>Halalkalibacterium (ex Joshi et al. 2022)</taxon>
    </lineage>
</organism>
<gene>
    <name evidence="1" type="primary">udk</name>
    <name type="ordered locus">BH1275</name>
</gene>
<feature type="chain" id="PRO_0000164463" description="Uridine kinase">
    <location>
        <begin position="1"/>
        <end position="211"/>
    </location>
</feature>
<feature type="binding site" evidence="1">
    <location>
        <begin position="12"/>
        <end position="19"/>
    </location>
    <ligand>
        <name>ATP</name>
        <dbReference type="ChEBI" id="CHEBI:30616"/>
    </ligand>
</feature>
<dbReference type="EC" id="2.7.1.48" evidence="1"/>
<dbReference type="EMBL" id="BA000004">
    <property type="protein sequence ID" value="BAB04994.1"/>
    <property type="molecule type" value="Genomic_DNA"/>
</dbReference>
<dbReference type="PIR" id="C83809">
    <property type="entry name" value="C83809"/>
</dbReference>
<dbReference type="RefSeq" id="WP_010897443.1">
    <property type="nucleotide sequence ID" value="NC_002570.2"/>
</dbReference>
<dbReference type="SMR" id="Q9KDD8"/>
<dbReference type="STRING" id="272558.gene:10727169"/>
<dbReference type="GeneID" id="87596898"/>
<dbReference type="KEGG" id="bha:BH1275"/>
<dbReference type="eggNOG" id="COG0572">
    <property type="taxonomic scope" value="Bacteria"/>
</dbReference>
<dbReference type="HOGENOM" id="CLU_021278_1_2_9"/>
<dbReference type="OrthoDB" id="9777642at2"/>
<dbReference type="UniPathway" id="UPA00574">
    <property type="reaction ID" value="UER00637"/>
</dbReference>
<dbReference type="UniPathway" id="UPA00579">
    <property type="reaction ID" value="UER00640"/>
</dbReference>
<dbReference type="Proteomes" id="UP000001258">
    <property type="component" value="Chromosome"/>
</dbReference>
<dbReference type="GO" id="GO:0005737">
    <property type="term" value="C:cytoplasm"/>
    <property type="evidence" value="ECO:0007669"/>
    <property type="project" value="UniProtKB-SubCell"/>
</dbReference>
<dbReference type="GO" id="GO:0005524">
    <property type="term" value="F:ATP binding"/>
    <property type="evidence" value="ECO:0007669"/>
    <property type="project" value="UniProtKB-UniRule"/>
</dbReference>
<dbReference type="GO" id="GO:0016887">
    <property type="term" value="F:ATP hydrolysis activity"/>
    <property type="evidence" value="ECO:0007669"/>
    <property type="project" value="InterPro"/>
</dbReference>
<dbReference type="GO" id="GO:0043771">
    <property type="term" value="F:cytidine kinase activity"/>
    <property type="evidence" value="ECO:0007669"/>
    <property type="project" value="RHEA"/>
</dbReference>
<dbReference type="GO" id="GO:0004849">
    <property type="term" value="F:uridine kinase activity"/>
    <property type="evidence" value="ECO:0007669"/>
    <property type="project" value="UniProtKB-UniRule"/>
</dbReference>
<dbReference type="GO" id="GO:0044211">
    <property type="term" value="P:CTP salvage"/>
    <property type="evidence" value="ECO:0007669"/>
    <property type="project" value="UniProtKB-UniRule"/>
</dbReference>
<dbReference type="GO" id="GO:0044206">
    <property type="term" value="P:UMP salvage"/>
    <property type="evidence" value="ECO:0007669"/>
    <property type="project" value="UniProtKB-UniRule"/>
</dbReference>
<dbReference type="CDD" id="cd02023">
    <property type="entry name" value="UMPK"/>
    <property type="match status" value="1"/>
</dbReference>
<dbReference type="FunFam" id="3.40.50.300:FF:000339">
    <property type="entry name" value="Uridine kinase"/>
    <property type="match status" value="1"/>
</dbReference>
<dbReference type="Gene3D" id="3.40.50.300">
    <property type="entry name" value="P-loop containing nucleotide triphosphate hydrolases"/>
    <property type="match status" value="1"/>
</dbReference>
<dbReference type="HAMAP" id="MF_00551">
    <property type="entry name" value="Uridine_kinase"/>
    <property type="match status" value="1"/>
</dbReference>
<dbReference type="InterPro" id="IPR003593">
    <property type="entry name" value="AAA+_ATPase"/>
</dbReference>
<dbReference type="InterPro" id="IPR027417">
    <property type="entry name" value="P-loop_NTPase"/>
</dbReference>
<dbReference type="InterPro" id="IPR006083">
    <property type="entry name" value="PRK/URK"/>
</dbReference>
<dbReference type="InterPro" id="IPR026008">
    <property type="entry name" value="Uridine_kinase"/>
</dbReference>
<dbReference type="InterPro" id="IPR000764">
    <property type="entry name" value="Uridine_kinase-like"/>
</dbReference>
<dbReference type="NCBIfam" id="NF004018">
    <property type="entry name" value="PRK05480.1"/>
    <property type="match status" value="1"/>
</dbReference>
<dbReference type="NCBIfam" id="TIGR00235">
    <property type="entry name" value="udk"/>
    <property type="match status" value="1"/>
</dbReference>
<dbReference type="PANTHER" id="PTHR10285">
    <property type="entry name" value="URIDINE KINASE"/>
    <property type="match status" value="1"/>
</dbReference>
<dbReference type="Pfam" id="PF00485">
    <property type="entry name" value="PRK"/>
    <property type="match status" value="1"/>
</dbReference>
<dbReference type="PRINTS" id="PR00988">
    <property type="entry name" value="URIDINKINASE"/>
</dbReference>
<dbReference type="SMART" id="SM00382">
    <property type="entry name" value="AAA"/>
    <property type="match status" value="1"/>
</dbReference>
<dbReference type="SUPFAM" id="SSF52540">
    <property type="entry name" value="P-loop containing nucleoside triphosphate hydrolases"/>
    <property type="match status" value="1"/>
</dbReference>
<evidence type="ECO:0000255" key="1">
    <source>
        <dbReference type="HAMAP-Rule" id="MF_00551"/>
    </source>
</evidence>
<accession>Q9KDD8</accession>
<comment type="catalytic activity">
    <reaction evidence="1">
        <text>uridine + ATP = UMP + ADP + H(+)</text>
        <dbReference type="Rhea" id="RHEA:16825"/>
        <dbReference type="ChEBI" id="CHEBI:15378"/>
        <dbReference type="ChEBI" id="CHEBI:16704"/>
        <dbReference type="ChEBI" id="CHEBI:30616"/>
        <dbReference type="ChEBI" id="CHEBI:57865"/>
        <dbReference type="ChEBI" id="CHEBI:456216"/>
        <dbReference type="EC" id="2.7.1.48"/>
    </reaction>
</comment>
<comment type="catalytic activity">
    <reaction evidence="1">
        <text>cytidine + ATP = CMP + ADP + H(+)</text>
        <dbReference type="Rhea" id="RHEA:24674"/>
        <dbReference type="ChEBI" id="CHEBI:15378"/>
        <dbReference type="ChEBI" id="CHEBI:17562"/>
        <dbReference type="ChEBI" id="CHEBI:30616"/>
        <dbReference type="ChEBI" id="CHEBI:60377"/>
        <dbReference type="ChEBI" id="CHEBI:456216"/>
        <dbReference type="EC" id="2.7.1.48"/>
    </reaction>
</comment>
<comment type="pathway">
    <text evidence="1">Pyrimidine metabolism; CTP biosynthesis via salvage pathway; CTP from cytidine: step 1/3.</text>
</comment>
<comment type="pathway">
    <text evidence="1">Pyrimidine metabolism; UMP biosynthesis via salvage pathway; UMP from uridine: step 1/1.</text>
</comment>
<comment type="subcellular location">
    <subcellularLocation>
        <location evidence="1">Cytoplasm</location>
    </subcellularLocation>
</comment>
<comment type="similarity">
    <text evidence="1">Belongs to the uridine kinase family.</text>
</comment>
<name>URK_HALH5</name>
<keyword id="KW-0067">ATP-binding</keyword>
<keyword id="KW-0963">Cytoplasm</keyword>
<keyword id="KW-0418">Kinase</keyword>
<keyword id="KW-0547">Nucleotide-binding</keyword>
<keyword id="KW-1185">Reference proteome</keyword>
<keyword id="KW-0808">Transferase</keyword>